<keyword id="KW-0175">Coiled coil</keyword>
<keyword id="KW-0256">Endoplasmic reticulum</keyword>
<keyword id="KW-0342">GTP-binding</keyword>
<keyword id="KW-0378">Hydrolase</keyword>
<keyword id="KW-0472">Membrane</keyword>
<keyword id="KW-0547">Nucleotide-binding</keyword>
<keyword id="KW-1185">Reference proteome</keyword>
<keyword id="KW-0812">Transmembrane</keyword>
<keyword id="KW-1133">Transmembrane helix</keyword>
<dbReference type="EC" id="3.6.5.-" evidence="1"/>
<dbReference type="EMBL" id="DP000010">
    <property type="protein sequence ID" value="ABA94555.1"/>
    <property type="molecule type" value="Genomic_DNA"/>
</dbReference>
<dbReference type="EMBL" id="AP008217">
    <property type="protein sequence ID" value="BAF28519.1"/>
    <property type="molecule type" value="Genomic_DNA"/>
</dbReference>
<dbReference type="EMBL" id="AP014967">
    <property type="protein sequence ID" value="BAT14610.1"/>
    <property type="molecule type" value="Genomic_DNA"/>
</dbReference>
<dbReference type="EMBL" id="CM000148">
    <property type="protein sequence ID" value="EEE52345.1"/>
    <property type="molecule type" value="Genomic_DNA"/>
</dbReference>
<dbReference type="EMBL" id="AK100485">
    <property type="protein sequence ID" value="BAG94632.1"/>
    <property type="molecule type" value="mRNA"/>
</dbReference>
<dbReference type="RefSeq" id="XP_015615176.1">
    <property type="nucleotide sequence ID" value="XM_015759690.1"/>
</dbReference>
<dbReference type="SMR" id="Q2R224"/>
<dbReference type="FunCoup" id="Q2R224">
    <property type="interactions" value="128"/>
</dbReference>
<dbReference type="STRING" id="39947.Q2R224"/>
<dbReference type="PaxDb" id="39947-Q2R224"/>
<dbReference type="EnsemblPlants" id="Os11t0582300-02">
    <property type="protein sequence ID" value="Os11t0582300-02"/>
    <property type="gene ID" value="Os11g0582300"/>
</dbReference>
<dbReference type="Gramene" id="Os11t0582300-02">
    <property type="protein sequence ID" value="Os11t0582300-02"/>
    <property type="gene ID" value="Os11g0582300"/>
</dbReference>
<dbReference type="KEGG" id="dosa:Os11g0582300"/>
<dbReference type="eggNOG" id="KOG2203">
    <property type="taxonomic scope" value="Eukaryota"/>
</dbReference>
<dbReference type="HOGENOM" id="CLU_011270_1_0_1"/>
<dbReference type="InParanoid" id="Q2R224"/>
<dbReference type="OMA" id="MSHNQKS"/>
<dbReference type="OrthoDB" id="1597724at2759"/>
<dbReference type="Proteomes" id="UP000000763">
    <property type="component" value="Chromosome 11"/>
</dbReference>
<dbReference type="Proteomes" id="UP000007752">
    <property type="component" value="Chromosome 11"/>
</dbReference>
<dbReference type="Proteomes" id="UP000059680">
    <property type="component" value="Chromosome 11"/>
</dbReference>
<dbReference type="ExpressionAtlas" id="Q2R224">
    <property type="expression patterns" value="baseline and differential"/>
</dbReference>
<dbReference type="GO" id="GO:0005783">
    <property type="term" value="C:endoplasmic reticulum"/>
    <property type="evidence" value="ECO:0000318"/>
    <property type="project" value="GO_Central"/>
</dbReference>
<dbReference type="GO" id="GO:0005789">
    <property type="term" value="C:endoplasmic reticulum membrane"/>
    <property type="evidence" value="ECO:0007669"/>
    <property type="project" value="UniProtKB-SubCell"/>
</dbReference>
<dbReference type="GO" id="GO:0005525">
    <property type="term" value="F:GTP binding"/>
    <property type="evidence" value="ECO:0007669"/>
    <property type="project" value="UniProtKB-UniRule"/>
</dbReference>
<dbReference type="GO" id="GO:0003924">
    <property type="term" value="F:GTPase activity"/>
    <property type="evidence" value="ECO:0000318"/>
    <property type="project" value="GO_Central"/>
</dbReference>
<dbReference type="GO" id="GO:0016320">
    <property type="term" value="P:endoplasmic reticulum membrane fusion"/>
    <property type="evidence" value="ECO:0000318"/>
    <property type="project" value="GO_Central"/>
</dbReference>
<dbReference type="CDD" id="cd01851">
    <property type="entry name" value="GBP"/>
    <property type="match status" value="1"/>
</dbReference>
<dbReference type="FunFam" id="3.40.50.300:FF:002271">
    <property type="entry name" value="Protein ROOT HAIR DEFECTIVE 3 homolog"/>
    <property type="match status" value="1"/>
</dbReference>
<dbReference type="Gene3D" id="3.40.50.300">
    <property type="entry name" value="P-loop containing nucleotide triphosphate hydrolases"/>
    <property type="match status" value="1"/>
</dbReference>
<dbReference type="HAMAP" id="MF_03109">
    <property type="entry name" value="Sey1"/>
    <property type="match status" value="1"/>
</dbReference>
<dbReference type="InterPro" id="IPR030386">
    <property type="entry name" value="G_GB1_RHD3_dom"/>
</dbReference>
<dbReference type="InterPro" id="IPR027417">
    <property type="entry name" value="P-loop_NTPase"/>
</dbReference>
<dbReference type="InterPro" id="IPR008803">
    <property type="entry name" value="RHD3/Sey1"/>
</dbReference>
<dbReference type="InterPro" id="IPR046758">
    <property type="entry name" value="Sey1/RHD3-like_3HB"/>
</dbReference>
<dbReference type="PANTHER" id="PTHR45923:SF7">
    <property type="entry name" value="PROTEIN ROOT HAIR DEFECTIVE 3 HOMOLOG 2"/>
    <property type="match status" value="1"/>
</dbReference>
<dbReference type="PANTHER" id="PTHR45923">
    <property type="entry name" value="PROTEIN SEY1"/>
    <property type="match status" value="1"/>
</dbReference>
<dbReference type="Pfam" id="PF05879">
    <property type="entry name" value="RHD3_GTPase"/>
    <property type="match status" value="1"/>
</dbReference>
<dbReference type="Pfam" id="PF20428">
    <property type="entry name" value="Sey1_3HB"/>
    <property type="match status" value="1"/>
</dbReference>
<dbReference type="SUPFAM" id="SSF52540">
    <property type="entry name" value="P-loop containing nucleoside triphosphate hydrolases"/>
    <property type="match status" value="1"/>
</dbReference>
<dbReference type="PROSITE" id="PS51715">
    <property type="entry name" value="G_GB1_RHD3"/>
    <property type="match status" value="1"/>
</dbReference>
<gene>
    <name type="ordered locus">Os11g0582300</name>
    <name type="ordered locus">LOC_Os11g37260</name>
    <name type="ORF">OsJ_34384</name>
</gene>
<evidence type="ECO:0000255" key="1">
    <source>
        <dbReference type="HAMAP-Rule" id="MF_03109"/>
    </source>
</evidence>
<evidence type="ECO:0000255" key="2">
    <source>
        <dbReference type="PROSITE-ProRule" id="PRU01052"/>
    </source>
</evidence>
<evidence type="ECO:0000256" key="3">
    <source>
        <dbReference type="SAM" id="MobiDB-lite"/>
    </source>
</evidence>
<protein>
    <recommendedName>
        <fullName evidence="1">Protein ROOT HAIR DEFECTIVE 3 homolog 2</fullName>
        <ecNumber evidence="1">3.6.5.-</ecNumber>
    </recommendedName>
    <alternativeName>
        <fullName evidence="1">Protein SEY1 homolog 3</fullName>
    </alternativeName>
</protein>
<name>RHD32_ORYSJ</name>
<comment type="function">
    <text evidence="1">Probable GTP-binding protein that may be involved in cell development.</text>
</comment>
<comment type="subcellular location">
    <subcellularLocation>
        <location evidence="1">Endoplasmic reticulum membrane</location>
        <topology evidence="1">Multi-pass membrane protein</topology>
    </subcellularLocation>
</comment>
<comment type="similarity">
    <text evidence="2">Belongs to the TRAFAC class dynamin-like GTPase superfamily. GB1/RHD3 GTPase family. RHD3 subfamily.</text>
</comment>
<accession>Q2R224</accession>
<accession>A0A0N7KT47</accession>
<proteinExistence type="evidence at transcript level"/>
<feature type="chain" id="PRO_0000407759" description="Protein ROOT HAIR DEFECTIVE 3 homolog 2">
    <location>
        <begin position="1"/>
        <end position="823"/>
    </location>
</feature>
<feature type="topological domain" description="Cytoplasmic" evidence="1">
    <location>
        <begin position="1"/>
        <end position="688"/>
    </location>
</feature>
<feature type="transmembrane region" description="Helical" evidence="1">
    <location>
        <begin position="689"/>
        <end position="709"/>
    </location>
</feature>
<feature type="topological domain" description="Lumenal" evidence="1">
    <location>
        <begin position="710"/>
        <end position="712"/>
    </location>
</feature>
<feature type="transmembrane region" description="Helical" evidence="1">
    <location>
        <begin position="713"/>
        <end position="733"/>
    </location>
</feature>
<feature type="topological domain" description="Cytoplasmic" evidence="1">
    <location>
        <begin position="734"/>
        <end position="823"/>
    </location>
</feature>
<feature type="domain" description="GB1/RHD3-type G" evidence="2">
    <location>
        <begin position="45"/>
        <end position="260"/>
    </location>
</feature>
<feature type="region of interest" description="Disordered" evidence="3">
    <location>
        <begin position="770"/>
        <end position="823"/>
    </location>
</feature>
<feature type="coiled-coil region" evidence="1">
    <location>
        <begin position="226"/>
        <end position="246"/>
    </location>
</feature>
<feature type="compositionally biased region" description="Low complexity" evidence="3">
    <location>
        <begin position="786"/>
        <end position="823"/>
    </location>
</feature>
<feature type="binding site" evidence="1">
    <location>
        <begin position="55"/>
        <end position="62"/>
    </location>
    <ligand>
        <name>GTP</name>
        <dbReference type="ChEBI" id="CHEBI:37565"/>
    </ligand>
</feature>
<reference key="1">
    <citation type="journal article" date="2005" name="BMC Biol.">
        <title>The sequence of rice chromosomes 11 and 12, rich in disease resistance genes and recent gene duplications.</title>
        <authorList>
            <consortium name="The rice chromosomes 11 and 12 sequencing consortia"/>
        </authorList>
    </citation>
    <scope>NUCLEOTIDE SEQUENCE [LARGE SCALE GENOMIC DNA]</scope>
    <source>
        <strain>cv. Nipponbare</strain>
    </source>
</reference>
<reference key="2">
    <citation type="journal article" date="2005" name="Nature">
        <title>The map-based sequence of the rice genome.</title>
        <authorList>
            <consortium name="International rice genome sequencing project (IRGSP)"/>
        </authorList>
    </citation>
    <scope>NUCLEOTIDE SEQUENCE [LARGE SCALE GENOMIC DNA]</scope>
    <source>
        <strain>cv. Nipponbare</strain>
    </source>
</reference>
<reference key="3">
    <citation type="journal article" date="2008" name="Nucleic Acids Res.">
        <title>The rice annotation project database (RAP-DB): 2008 update.</title>
        <authorList>
            <consortium name="The rice annotation project (RAP)"/>
        </authorList>
    </citation>
    <scope>GENOME REANNOTATION</scope>
    <source>
        <strain>cv. Nipponbare</strain>
    </source>
</reference>
<reference key="4">
    <citation type="journal article" date="2013" name="Rice">
        <title>Improvement of the Oryza sativa Nipponbare reference genome using next generation sequence and optical map data.</title>
        <authorList>
            <person name="Kawahara Y."/>
            <person name="de la Bastide M."/>
            <person name="Hamilton J.P."/>
            <person name="Kanamori H."/>
            <person name="McCombie W.R."/>
            <person name="Ouyang S."/>
            <person name="Schwartz D.C."/>
            <person name="Tanaka T."/>
            <person name="Wu J."/>
            <person name="Zhou S."/>
            <person name="Childs K.L."/>
            <person name="Davidson R.M."/>
            <person name="Lin H."/>
            <person name="Quesada-Ocampo L."/>
            <person name="Vaillancourt B."/>
            <person name="Sakai H."/>
            <person name="Lee S.S."/>
            <person name="Kim J."/>
            <person name="Numa H."/>
            <person name="Itoh T."/>
            <person name="Buell C.R."/>
            <person name="Matsumoto T."/>
        </authorList>
    </citation>
    <scope>GENOME REANNOTATION</scope>
    <source>
        <strain>cv. Nipponbare</strain>
    </source>
</reference>
<reference key="5">
    <citation type="journal article" date="2005" name="PLoS Biol.">
        <title>The genomes of Oryza sativa: a history of duplications.</title>
        <authorList>
            <person name="Yu J."/>
            <person name="Wang J."/>
            <person name="Lin W."/>
            <person name="Li S."/>
            <person name="Li H."/>
            <person name="Zhou J."/>
            <person name="Ni P."/>
            <person name="Dong W."/>
            <person name="Hu S."/>
            <person name="Zeng C."/>
            <person name="Zhang J."/>
            <person name="Zhang Y."/>
            <person name="Li R."/>
            <person name="Xu Z."/>
            <person name="Li S."/>
            <person name="Li X."/>
            <person name="Zheng H."/>
            <person name="Cong L."/>
            <person name="Lin L."/>
            <person name="Yin J."/>
            <person name="Geng J."/>
            <person name="Li G."/>
            <person name="Shi J."/>
            <person name="Liu J."/>
            <person name="Lv H."/>
            <person name="Li J."/>
            <person name="Wang J."/>
            <person name="Deng Y."/>
            <person name="Ran L."/>
            <person name="Shi X."/>
            <person name="Wang X."/>
            <person name="Wu Q."/>
            <person name="Li C."/>
            <person name="Ren X."/>
            <person name="Wang J."/>
            <person name="Wang X."/>
            <person name="Li D."/>
            <person name="Liu D."/>
            <person name="Zhang X."/>
            <person name="Ji Z."/>
            <person name="Zhao W."/>
            <person name="Sun Y."/>
            <person name="Zhang Z."/>
            <person name="Bao J."/>
            <person name="Han Y."/>
            <person name="Dong L."/>
            <person name="Ji J."/>
            <person name="Chen P."/>
            <person name="Wu S."/>
            <person name="Liu J."/>
            <person name="Xiao Y."/>
            <person name="Bu D."/>
            <person name="Tan J."/>
            <person name="Yang L."/>
            <person name="Ye C."/>
            <person name="Zhang J."/>
            <person name="Xu J."/>
            <person name="Zhou Y."/>
            <person name="Yu Y."/>
            <person name="Zhang B."/>
            <person name="Zhuang S."/>
            <person name="Wei H."/>
            <person name="Liu B."/>
            <person name="Lei M."/>
            <person name="Yu H."/>
            <person name="Li Y."/>
            <person name="Xu H."/>
            <person name="Wei S."/>
            <person name="He X."/>
            <person name="Fang L."/>
            <person name="Zhang Z."/>
            <person name="Zhang Y."/>
            <person name="Huang X."/>
            <person name="Su Z."/>
            <person name="Tong W."/>
            <person name="Li J."/>
            <person name="Tong Z."/>
            <person name="Li S."/>
            <person name="Ye J."/>
            <person name="Wang L."/>
            <person name="Fang L."/>
            <person name="Lei T."/>
            <person name="Chen C.-S."/>
            <person name="Chen H.-C."/>
            <person name="Xu Z."/>
            <person name="Li H."/>
            <person name="Huang H."/>
            <person name="Zhang F."/>
            <person name="Xu H."/>
            <person name="Li N."/>
            <person name="Zhao C."/>
            <person name="Li S."/>
            <person name="Dong L."/>
            <person name="Huang Y."/>
            <person name="Li L."/>
            <person name="Xi Y."/>
            <person name="Qi Q."/>
            <person name="Li W."/>
            <person name="Zhang B."/>
            <person name="Hu W."/>
            <person name="Zhang Y."/>
            <person name="Tian X."/>
            <person name="Jiao Y."/>
            <person name="Liang X."/>
            <person name="Jin J."/>
            <person name="Gao L."/>
            <person name="Zheng W."/>
            <person name="Hao B."/>
            <person name="Liu S.-M."/>
            <person name="Wang W."/>
            <person name="Yuan L."/>
            <person name="Cao M."/>
            <person name="McDermott J."/>
            <person name="Samudrala R."/>
            <person name="Wang J."/>
            <person name="Wong G.K.-S."/>
            <person name="Yang H."/>
        </authorList>
    </citation>
    <scope>NUCLEOTIDE SEQUENCE [LARGE SCALE GENOMIC DNA]</scope>
    <source>
        <strain>cv. Nipponbare</strain>
    </source>
</reference>
<reference key="6">
    <citation type="journal article" date="2003" name="Science">
        <title>Collection, mapping, and annotation of over 28,000 cDNA clones from japonica rice.</title>
        <authorList>
            <consortium name="The rice full-length cDNA consortium"/>
        </authorList>
    </citation>
    <scope>NUCLEOTIDE SEQUENCE [LARGE SCALE MRNA]</scope>
    <source>
        <strain>cv. Nipponbare</strain>
    </source>
</reference>
<sequence length="823" mass="92010">MEVPISGGGGGERFCHAAQVVGADGEMDGEAMARFAAGAGLLGRGLSYAVVSIVGPQGSGKSTLLNQLFGTSFTEMDALKGRSQTTKGIWIAKAVGIEPFTVVMDLEGTDGRERGEDDTAFEKQSALFALAVSDIVMINLWCHDIGREHAANRPLLKTIFEVLMRLFSPRKTTLLLVIRDKTKTPLEYLTQALKEDIQKIWNAVRKPEVYKEAALSEFFNVEVTALSSYEEKENLFKEQVGQLRQRFIHSIAPGGLAADRRGVIPASGFCLSALQIWKVIRENKDLNLPAHKIMVATVRCEEIADEKLRSFISDKGWLELETAANSGLVPGFGKKLNAILDFYLSEYDTEAMYFDEDVRTAKRQQLESEILKHTYDAFKKMLEHLHHVVLNKFKSDLEQSLRSGEGFAASARYCVQSSMAEFDAGLRDALVKHAEWDTTKVRSKLEQHIEAHATSVRGTKLAELKANYEKKLLDTLAGPVQSILETGEKDSWACIRRLYRHATESAILAFSASLSEFELDQTTIRKMVMELREHARSIVEEKAREEAGNVLMRMKERFSTVLSRDKDSMPRTWKGNEDIRAITREARLAALRLMSVMAAVRLDDKPDKIDRALTTALLDGGPLSQKRSIEFTSDPLASSTWEEVSEKNTLITPVQCKSIWRQFNAETEYAVAQAISMQEAHRRSNNWLPPAWTVLLLAILGYNEFIFLLRNPLYLLGLFVAFVVSYAAWLQYDITAYFRHGTLSGLLTITSGFLPTIMDIITAVINMSHNQKSSSHPPRHRPPLHPQSFRNQAQQQSQAQVQYQAPSSLSSSSSVGSNSDDES</sequence>
<organism>
    <name type="scientific">Oryza sativa subsp. japonica</name>
    <name type="common">Rice</name>
    <dbReference type="NCBI Taxonomy" id="39947"/>
    <lineage>
        <taxon>Eukaryota</taxon>
        <taxon>Viridiplantae</taxon>
        <taxon>Streptophyta</taxon>
        <taxon>Embryophyta</taxon>
        <taxon>Tracheophyta</taxon>
        <taxon>Spermatophyta</taxon>
        <taxon>Magnoliopsida</taxon>
        <taxon>Liliopsida</taxon>
        <taxon>Poales</taxon>
        <taxon>Poaceae</taxon>
        <taxon>BOP clade</taxon>
        <taxon>Oryzoideae</taxon>
        <taxon>Oryzeae</taxon>
        <taxon>Oryzinae</taxon>
        <taxon>Oryza</taxon>
        <taxon>Oryza sativa</taxon>
    </lineage>
</organism>